<dbReference type="EC" id="2.1.2.11" evidence="1"/>
<dbReference type="EMBL" id="AE017126">
    <property type="protein sequence ID" value="AAQ00428.1"/>
    <property type="molecule type" value="Genomic_DNA"/>
</dbReference>
<dbReference type="EMBL" id="AJ237851">
    <property type="protein sequence ID" value="CAB95029.1"/>
    <property type="molecule type" value="Genomic_DNA"/>
</dbReference>
<dbReference type="RefSeq" id="NP_875775.1">
    <property type="nucleotide sequence ID" value="NC_005042.1"/>
</dbReference>
<dbReference type="RefSeq" id="WP_011125535.1">
    <property type="nucleotide sequence ID" value="NC_005042.1"/>
</dbReference>
<dbReference type="SMR" id="Q93JX5"/>
<dbReference type="STRING" id="167539.Pro_1384"/>
<dbReference type="EnsemblBacteria" id="AAQ00428">
    <property type="protein sequence ID" value="AAQ00428"/>
    <property type="gene ID" value="Pro_1384"/>
</dbReference>
<dbReference type="KEGG" id="pma:Pro_1384"/>
<dbReference type="PATRIC" id="fig|167539.5.peg.1451"/>
<dbReference type="eggNOG" id="COG0413">
    <property type="taxonomic scope" value="Bacteria"/>
</dbReference>
<dbReference type="HOGENOM" id="CLU_036645_1_0_3"/>
<dbReference type="OrthoDB" id="9781789at2"/>
<dbReference type="UniPathway" id="UPA00028">
    <property type="reaction ID" value="UER00003"/>
</dbReference>
<dbReference type="Proteomes" id="UP000001420">
    <property type="component" value="Chromosome"/>
</dbReference>
<dbReference type="GO" id="GO:0005737">
    <property type="term" value="C:cytoplasm"/>
    <property type="evidence" value="ECO:0007669"/>
    <property type="project" value="UniProtKB-SubCell"/>
</dbReference>
<dbReference type="GO" id="GO:0003864">
    <property type="term" value="F:3-methyl-2-oxobutanoate hydroxymethyltransferase activity"/>
    <property type="evidence" value="ECO:0007669"/>
    <property type="project" value="UniProtKB-UniRule"/>
</dbReference>
<dbReference type="GO" id="GO:0000287">
    <property type="term" value="F:magnesium ion binding"/>
    <property type="evidence" value="ECO:0007669"/>
    <property type="project" value="TreeGrafter"/>
</dbReference>
<dbReference type="GO" id="GO:0015940">
    <property type="term" value="P:pantothenate biosynthetic process"/>
    <property type="evidence" value="ECO:0007669"/>
    <property type="project" value="UniProtKB-UniRule"/>
</dbReference>
<dbReference type="CDD" id="cd06557">
    <property type="entry name" value="KPHMT-like"/>
    <property type="match status" value="1"/>
</dbReference>
<dbReference type="Gene3D" id="3.20.20.60">
    <property type="entry name" value="Phosphoenolpyruvate-binding domains"/>
    <property type="match status" value="1"/>
</dbReference>
<dbReference type="HAMAP" id="MF_00156">
    <property type="entry name" value="PanB"/>
    <property type="match status" value="1"/>
</dbReference>
<dbReference type="InterPro" id="IPR003700">
    <property type="entry name" value="Pantoate_hydroxy_MeTrfase"/>
</dbReference>
<dbReference type="InterPro" id="IPR015813">
    <property type="entry name" value="Pyrv/PenolPyrv_kinase-like_dom"/>
</dbReference>
<dbReference type="InterPro" id="IPR040442">
    <property type="entry name" value="Pyrv_kinase-like_dom_sf"/>
</dbReference>
<dbReference type="NCBIfam" id="TIGR00222">
    <property type="entry name" value="panB"/>
    <property type="match status" value="1"/>
</dbReference>
<dbReference type="NCBIfam" id="NF001452">
    <property type="entry name" value="PRK00311.1"/>
    <property type="match status" value="1"/>
</dbReference>
<dbReference type="PANTHER" id="PTHR20881">
    <property type="entry name" value="3-METHYL-2-OXOBUTANOATE HYDROXYMETHYLTRANSFERASE"/>
    <property type="match status" value="1"/>
</dbReference>
<dbReference type="PANTHER" id="PTHR20881:SF0">
    <property type="entry name" value="3-METHYL-2-OXOBUTANOATE HYDROXYMETHYLTRANSFERASE"/>
    <property type="match status" value="1"/>
</dbReference>
<dbReference type="Pfam" id="PF02548">
    <property type="entry name" value="Pantoate_transf"/>
    <property type="match status" value="1"/>
</dbReference>
<dbReference type="PIRSF" id="PIRSF000388">
    <property type="entry name" value="Pantoate_hydroxy_MeTrfase"/>
    <property type="match status" value="1"/>
</dbReference>
<dbReference type="SUPFAM" id="SSF51621">
    <property type="entry name" value="Phosphoenolpyruvate/pyruvate domain"/>
    <property type="match status" value="1"/>
</dbReference>
<accession>Q93JX5</accession>
<accession>Q7BWH5</accession>
<organism>
    <name type="scientific">Prochlorococcus marinus (strain SARG / CCMP1375 / SS120)</name>
    <dbReference type="NCBI Taxonomy" id="167539"/>
    <lineage>
        <taxon>Bacteria</taxon>
        <taxon>Bacillati</taxon>
        <taxon>Cyanobacteriota</taxon>
        <taxon>Cyanophyceae</taxon>
        <taxon>Synechococcales</taxon>
        <taxon>Prochlorococcaceae</taxon>
        <taxon>Prochlorococcus</taxon>
    </lineage>
</organism>
<feature type="chain" id="PRO_0000297321" description="3-methyl-2-oxobutanoate hydroxymethyltransferase">
    <location>
        <begin position="1"/>
        <end position="256"/>
    </location>
</feature>
<feature type="active site" description="Proton acceptor" evidence="1">
    <location>
        <position position="185"/>
    </location>
</feature>
<feature type="binding site" evidence="1">
    <location>
        <begin position="42"/>
        <end position="43"/>
    </location>
    <ligand>
        <name>3-methyl-2-oxobutanoate</name>
        <dbReference type="ChEBI" id="CHEBI:11851"/>
    </ligand>
</feature>
<feature type="binding site" evidence="1">
    <location>
        <position position="42"/>
    </location>
    <ligand>
        <name>Mg(2+)</name>
        <dbReference type="ChEBI" id="CHEBI:18420"/>
    </ligand>
</feature>
<feature type="binding site" evidence="1">
    <location>
        <position position="86"/>
    </location>
    <ligand>
        <name>3-methyl-2-oxobutanoate</name>
        <dbReference type="ChEBI" id="CHEBI:11851"/>
    </ligand>
</feature>
<feature type="binding site" evidence="1">
    <location>
        <position position="86"/>
    </location>
    <ligand>
        <name>Mg(2+)</name>
        <dbReference type="ChEBI" id="CHEBI:18420"/>
    </ligand>
</feature>
<feature type="binding site" evidence="1">
    <location>
        <position position="116"/>
    </location>
    <ligand>
        <name>3-methyl-2-oxobutanoate</name>
        <dbReference type="ChEBI" id="CHEBI:11851"/>
    </ligand>
</feature>
<feature type="binding site" evidence="1">
    <location>
        <position position="118"/>
    </location>
    <ligand>
        <name>Mg(2+)</name>
        <dbReference type="ChEBI" id="CHEBI:18420"/>
    </ligand>
</feature>
<gene>
    <name evidence="1" type="primary">panB</name>
    <name type="ordered locus">Pro_1384</name>
</gene>
<keyword id="KW-0963">Cytoplasm</keyword>
<keyword id="KW-0460">Magnesium</keyword>
<keyword id="KW-0479">Metal-binding</keyword>
<keyword id="KW-0566">Pantothenate biosynthesis</keyword>
<keyword id="KW-1185">Reference proteome</keyword>
<keyword id="KW-0808">Transferase</keyword>
<sequence length="256" mass="27506">MLPKELVRFKELGNQITILTAWDSLSSAIVEAAGADVVLVGDSLAMFIHGHTTTLPVTLEQMLHHTQAVGRGFLSPKNKQPLVVCDLPFLSYQCGEDKAVAAAGTLLKNSCAAAVKIEGAEPEVISVIERLIRMGIPVMGHLGLTPQSVNNLGYHRQAEDALGQEKLVTQALKIEQVGCFSVVLEHVPSKVASKVTQMLKIPVIGIGAGEECDGQVRVTADLLGLTDKQPPFAKPLIDGRSLFIESLTSWVDQLRN</sequence>
<reference key="1">
    <citation type="submission" date="1999-04" db="EMBL/GenBank/DDBJ databases">
        <title>Sequence and expression analysis of ftsZ in Prochlorococcus sp.</title>
        <authorList>
            <person name="Holtzendorff J."/>
            <person name="Hess W.R."/>
            <person name="Jacquet S."/>
            <person name="Partensky F."/>
        </authorList>
    </citation>
    <scope>NUCLEOTIDE SEQUENCE [GENOMIC DNA]</scope>
    <source>
        <strain>SARG / CCMP1375 / SS120</strain>
    </source>
</reference>
<reference key="2">
    <citation type="journal article" date="2003" name="Proc. Natl. Acad. Sci. U.S.A.">
        <title>Genome sequence of the cyanobacterium Prochlorococcus marinus SS120, a nearly minimal oxyphototrophic genome.</title>
        <authorList>
            <person name="Dufresne A."/>
            <person name="Salanoubat M."/>
            <person name="Partensky F."/>
            <person name="Artiguenave F."/>
            <person name="Axmann I.M."/>
            <person name="Barbe V."/>
            <person name="Duprat S."/>
            <person name="Galperin M.Y."/>
            <person name="Koonin E.V."/>
            <person name="Le Gall F."/>
            <person name="Makarova K.S."/>
            <person name="Ostrowski M."/>
            <person name="Oztas S."/>
            <person name="Robert C."/>
            <person name="Rogozin I.B."/>
            <person name="Scanlan D.J."/>
            <person name="Tandeau de Marsac N."/>
            <person name="Weissenbach J."/>
            <person name="Wincker P."/>
            <person name="Wolf Y.I."/>
            <person name="Hess W.R."/>
        </authorList>
    </citation>
    <scope>NUCLEOTIDE SEQUENCE [LARGE SCALE GENOMIC DNA]</scope>
    <source>
        <strain>SARG / CCMP1375 / SS120</strain>
    </source>
</reference>
<protein>
    <recommendedName>
        <fullName evidence="1">3-methyl-2-oxobutanoate hydroxymethyltransferase</fullName>
        <ecNumber evidence="1">2.1.2.11</ecNumber>
    </recommendedName>
    <alternativeName>
        <fullName evidence="1">Ketopantoate hydroxymethyltransferase</fullName>
        <shortName evidence="1">KPHMT</shortName>
    </alternativeName>
</protein>
<evidence type="ECO:0000255" key="1">
    <source>
        <dbReference type="HAMAP-Rule" id="MF_00156"/>
    </source>
</evidence>
<comment type="function">
    <text evidence="1">Catalyzes the reversible reaction in which hydroxymethyl group from 5,10-methylenetetrahydrofolate is transferred onto alpha-ketoisovalerate to form ketopantoate.</text>
</comment>
<comment type="catalytic activity">
    <reaction evidence="1">
        <text>3-methyl-2-oxobutanoate + (6R)-5,10-methylene-5,6,7,8-tetrahydrofolate + H2O = 2-dehydropantoate + (6S)-5,6,7,8-tetrahydrofolate</text>
        <dbReference type="Rhea" id="RHEA:11824"/>
        <dbReference type="ChEBI" id="CHEBI:11561"/>
        <dbReference type="ChEBI" id="CHEBI:11851"/>
        <dbReference type="ChEBI" id="CHEBI:15377"/>
        <dbReference type="ChEBI" id="CHEBI:15636"/>
        <dbReference type="ChEBI" id="CHEBI:57453"/>
        <dbReference type="EC" id="2.1.2.11"/>
    </reaction>
</comment>
<comment type="cofactor">
    <cofactor evidence="1">
        <name>Mg(2+)</name>
        <dbReference type="ChEBI" id="CHEBI:18420"/>
    </cofactor>
    <text evidence="1">Binds 1 Mg(2+) ion per subunit.</text>
</comment>
<comment type="pathway">
    <text evidence="1">Cofactor biosynthesis; (R)-pantothenate biosynthesis; (R)-pantoate from 3-methyl-2-oxobutanoate: step 1/2.</text>
</comment>
<comment type="subunit">
    <text evidence="1">Homodecamer; pentamer of dimers.</text>
</comment>
<comment type="subcellular location">
    <subcellularLocation>
        <location evidence="1">Cytoplasm</location>
    </subcellularLocation>
</comment>
<comment type="similarity">
    <text evidence="1">Belongs to the PanB family.</text>
</comment>
<name>PANB_PROMA</name>
<proteinExistence type="inferred from homology"/>